<organism>
    <name type="scientific">Penicillium rubens (strain ATCC 28089 / DSM 1075 / NRRL 1951 / Wisconsin 54-1255)</name>
    <name type="common">Penicillium chrysogenum</name>
    <dbReference type="NCBI Taxonomy" id="500485"/>
    <lineage>
        <taxon>Eukaryota</taxon>
        <taxon>Fungi</taxon>
        <taxon>Dikarya</taxon>
        <taxon>Ascomycota</taxon>
        <taxon>Pezizomycotina</taxon>
        <taxon>Eurotiomycetes</taxon>
        <taxon>Eurotiomycetidae</taxon>
        <taxon>Eurotiales</taxon>
        <taxon>Aspergillaceae</taxon>
        <taxon>Penicillium</taxon>
        <taxon>Penicillium chrysogenum species complex</taxon>
    </lineage>
</organism>
<dbReference type="EC" id="2.3.1.-" evidence="10"/>
<dbReference type="EMBL" id="AM920437">
    <property type="protein sequence ID" value="CAP99573.1"/>
    <property type="status" value="ALT_SEQ"/>
    <property type="molecule type" value="Genomic_DNA"/>
</dbReference>
<dbReference type="RefSeq" id="XP_002566179.1">
    <property type="nucleotide sequence ID" value="XM_002566133.1"/>
</dbReference>
<dbReference type="SMR" id="B6HV32"/>
<dbReference type="STRING" id="500485.B6HV32"/>
<dbReference type="ESTHER" id="penrw-adrd">
    <property type="family name" value="BD-FAE"/>
</dbReference>
<dbReference type="eggNOG" id="KOG2125">
    <property type="taxonomic scope" value="Eukaryota"/>
</dbReference>
<dbReference type="HOGENOM" id="CLU_000022_6_3_1"/>
<dbReference type="OrthoDB" id="272139at2759"/>
<dbReference type="BioCyc" id="PCHR:PC22G22850-MONOMER"/>
<dbReference type="UniPathway" id="UPA00213"/>
<dbReference type="Proteomes" id="UP000000724">
    <property type="component" value="Contig Pc00c22"/>
</dbReference>
<dbReference type="GO" id="GO:0004315">
    <property type="term" value="F:3-oxoacyl-[acyl-carrier-protein] synthase activity"/>
    <property type="evidence" value="ECO:0007669"/>
    <property type="project" value="InterPro"/>
</dbReference>
<dbReference type="GO" id="GO:0004312">
    <property type="term" value="F:fatty acid synthase activity"/>
    <property type="evidence" value="ECO:0007669"/>
    <property type="project" value="TreeGrafter"/>
</dbReference>
<dbReference type="GO" id="GO:0008168">
    <property type="term" value="F:methyltransferase activity"/>
    <property type="evidence" value="ECO:0007669"/>
    <property type="project" value="UniProtKB-KW"/>
</dbReference>
<dbReference type="GO" id="GO:0031177">
    <property type="term" value="F:phosphopantetheine binding"/>
    <property type="evidence" value="ECO:0007669"/>
    <property type="project" value="InterPro"/>
</dbReference>
<dbReference type="GO" id="GO:0008236">
    <property type="term" value="F:serine-type peptidase activity"/>
    <property type="evidence" value="ECO:0007669"/>
    <property type="project" value="InterPro"/>
</dbReference>
<dbReference type="GO" id="GO:0017000">
    <property type="term" value="P:antibiotic biosynthetic process"/>
    <property type="evidence" value="ECO:0007669"/>
    <property type="project" value="UniProtKB-ARBA"/>
</dbReference>
<dbReference type="GO" id="GO:0006633">
    <property type="term" value="P:fatty acid biosynthetic process"/>
    <property type="evidence" value="ECO:0007669"/>
    <property type="project" value="InterPro"/>
</dbReference>
<dbReference type="GO" id="GO:1901336">
    <property type="term" value="P:lactone biosynthetic process"/>
    <property type="evidence" value="ECO:0007669"/>
    <property type="project" value="UniProtKB-ARBA"/>
</dbReference>
<dbReference type="GO" id="GO:0032259">
    <property type="term" value="P:methylation"/>
    <property type="evidence" value="ECO:0007669"/>
    <property type="project" value="UniProtKB-KW"/>
</dbReference>
<dbReference type="GO" id="GO:0030639">
    <property type="term" value="P:polyketide biosynthetic process"/>
    <property type="evidence" value="ECO:0007669"/>
    <property type="project" value="UniProtKB-ARBA"/>
</dbReference>
<dbReference type="GO" id="GO:0006508">
    <property type="term" value="P:proteolysis"/>
    <property type="evidence" value="ECO:0007669"/>
    <property type="project" value="InterPro"/>
</dbReference>
<dbReference type="GO" id="GO:0016114">
    <property type="term" value="P:terpenoid biosynthetic process"/>
    <property type="evidence" value="ECO:0007669"/>
    <property type="project" value="UniProtKB-UniPathway"/>
</dbReference>
<dbReference type="CDD" id="cd00833">
    <property type="entry name" value="PKS"/>
    <property type="match status" value="1"/>
</dbReference>
<dbReference type="Gene3D" id="3.30.70.3290">
    <property type="match status" value="1"/>
</dbReference>
<dbReference type="Gene3D" id="3.40.47.10">
    <property type="match status" value="1"/>
</dbReference>
<dbReference type="Gene3D" id="1.10.1200.10">
    <property type="entry name" value="ACP-like"/>
    <property type="match status" value="1"/>
</dbReference>
<dbReference type="Gene3D" id="3.40.50.1820">
    <property type="entry name" value="alpha/beta hydrolase"/>
    <property type="match status" value="1"/>
</dbReference>
<dbReference type="Gene3D" id="3.40.366.10">
    <property type="entry name" value="Malonyl-Coenzyme A Acyl Carrier Protein, domain 2"/>
    <property type="match status" value="2"/>
</dbReference>
<dbReference type="Gene3D" id="3.10.129.110">
    <property type="entry name" value="Polyketide synthase dehydratase"/>
    <property type="match status" value="1"/>
</dbReference>
<dbReference type="Gene3D" id="3.40.50.150">
    <property type="entry name" value="Vaccinia Virus protein VP39"/>
    <property type="match status" value="1"/>
</dbReference>
<dbReference type="InterPro" id="IPR013094">
    <property type="entry name" value="AB_hydrolase_3"/>
</dbReference>
<dbReference type="InterPro" id="IPR029058">
    <property type="entry name" value="AB_hydrolase_fold"/>
</dbReference>
<dbReference type="InterPro" id="IPR001227">
    <property type="entry name" value="Ac_transferase_dom_sf"/>
</dbReference>
<dbReference type="InterPro" id="IPR036736">
    <property type="entry name" value="ACP-like_sf"/>
</dbReference>
<dbReference type="InterPro" id="IPR014043">
    <property type="entry name" value="Acyl_transferase_dom"/>
</dbReference>
<dbReference type="InterPro" id="IPR016035">
    <property type="entry name" value="Acyl_Trfase/lysoPLipase"/>
</dbReference>
<dbReference type="InterPro" id="IPR018201">
    <property type="entry name" value="Ketoacyl_synth_AS"/>
</dbReference>
<dbReference type="InterPro" id="IPR014031">
    <property type="entry name" value="Ketoacyl_synth_C"/>
</dbReference>
<dbReference type="InterPro" id="IPR014030">
    <property type="entry name" value="Ketoacyl_synth_N"/>
</dbReference>
<dbReference type="InterPro" id="IPR016036">
    <property type="entry name" value="Malonyl_transacylase_ACP-bd"/>
</dbReference>
<dbReference type="InterPro" id="IPR013217">
    <property type="entry name" value="Methyltransf_12"/>
</dbReference>
<dbReference type="InterPro" id="IPR001375">
    <property type="entry name" value="Peptidase_S9_cat"/>
</dbReference>
<dbReference type="InterPro" id="IPR020841">
    <property type="entry name" value="PKS_Beta-ketoAc_synthase_dom"/>
</dbReference>
<dbReference type="InterPro" id="IPR042104">
    <property type="entry name" value="PKS_dehydratase_sf"/>
</dbReference>
<dbReference type="InterPro" id="IPR020807">
    <property type="entry name" value="PKS_DH"/>
</dbReference>
<dbReference type="InterPro" id="IPR049552">
    <property type="entry name" value="PKS_DH_N"/>
</dbReference>
<dbReference type="InterPro" id="IPR049900">
    <property type="entry name" value="PKS_mFAS_DH"/>
</dbReference>
<dbReference type="InterPro" id="IPR050091">
    <property type="entry name" value="PKS_NRPS_Biosynth_Enz"/>
</dbReference>
<dbReference type="InterPro" id="IPR020806">
    <property type="entry name" value="PKS_PP-bd"/>
</dbReference>
<dbReference type="InterPro" id="IPR009081">
    <property type="entry name" value="PP-bd_ACP"/>
</dbReference>
<dbReference type="InterPro" id="IPR029063">
    <property type="entry name" value="SAM-dependent_MTases_sf"/>
</dbReference>
<dbReference type="InterPro" id="IPR032088">
    <property type="entry name" value="SAT"/>
</dbReference>
<dbReference type="InterPro" id="IPR016039">
    <property type="entry name" value="Thiolase-like"/>
</dbReference>
<dbReference type="PANTHER" id="PTHR43775">
    <property type="entry name" value="FATTY ACID SYNTHASE"/>
    <property type="match status" value="1"/>
</dbReference>
<dbReference type="PANTHER" id="PTHR43775:SF21">
    <property type="entry name" value="NON-REDUCING POLYKETIDE SYNTHASE AUSA-RELATED"/>
    <property type="match status" value="1"/>
</dbReference>
<dbReference type="Pfam" id="PF07859">
    <property type="entry name" value="Abhydrolase_3"/>
    <property type="match status" value="1"/>
</dbReference>
<dbReference type="Pfam" id="PF00698">
    <property type="entry name" value="Acyl_transf_1"/>
    <property type="match status" value="1"/>
</dbReference>
<dbReference type="Pfam" id="PF18558">
    <property type="entry name" value="HTH_51"/>
    <property type="match status" value="1"/>
</dbReference>
<dbReference type="Pfam" id="PF00109">
    <property type="entry name" value="ketoacyl-synt"/>
    <property type="match status" value="1"/>
</dbReference>
<dbReference type="Pfam" id="PF02801">
    <property type="entry name" value="Ketoacyl-synt_C"/>
    <property type="match status" value="1"/>
</dbReference>
<dbReference type="Pfam" id="PF08242">
    <property type="entry name" value="Methyltransf_12"/>
    <property type="match status" value="1"/>
</dbReference>
<dbReference type="Pfam" id="PF00326">
    <property type="entry name" value="Peptidase_S9"/>
    <property type="match status" value="1"/>
</dbReference>
<dbReference type="Pfam" id="PF21089">
    <property type="entry name" value="PKS_DH_N"/>
    <property type="match status" value="1"/>
</dbReference>
<dbReference type="Pfam" id="PF00550">
    <property type="entry name" value="PP-binding"/>
    <property type="match status" value="1"/>
</dbReference>
<dbReference type="Pfam" id="PF16073">
    <property type="entry name" value="SAT"/>
    <property type="match status" value="1"/>
</dbReference>
<dbReference type="SMART" id="SM00827">
    <property type="entry name" value="PKS_AT"/>
    <property type="match status" value="1"/>
</dbReference>
<dbReference type="SMART" id="SM00826">
    <property type="entry name" value="PKS_DH"/>
    <property type="match status" value="1"/>
</dbReference>
<dbReference type="SMART" id="SM00825">
    <property type="entry name" value="PKS_KS"/>
    <property type="match status" value="1"/>
</dbReference>
<dbReference type="SMART" id="SM00823">
    <property type="entry name" value="PKS_PP"/>
    <property type="match status" value="1"/>
</dbReference>
<dbReference type="SUPFAM" id="SSF47336">
    <property type="entry name" value="ACP-like"/>
    <property type="match status" value="1"/>
</dbReference>
<dbReference type="SUPFAM" id="SSF53474">
    <property type="entry name" value="alpha/beta-Hydrolases"/>
    <property type="match status" value="1"/>
</dbReference>
<dbReference type="SUPFAM" id="SSF52151">
    <property type="entry name" value="FabD/lysophospholipase-like"/>
    <property type="match status" value="1"/>
</dbReference>
<dbReference type="SUPFAM" id="SSF55048">
    <property type="entry name" value="Probable ACP-binding domain of malonyl-CoA ACP transacylase"/>
    <property type="match status" value="1"/>
</dbReference>
<dbReference type="SUPFAM" id="SSF53335">
    <property type="entry name" value="S-adenosyl-L-methionine-dependent methyltransferases"/>
    <property type="match status" value="1"/>
</dbReference>
<dbReference type="SUPFAM" id="SSF53901">
    <property type="entry name" value="Thiolase-like"/>
    <property type="match status" value="1"/>
</dbReference>
<dbReference type="PROSITE" id="PS50075">
    <property type="entry name" value="CARRIER"/>
    <property type="match status" value="1"/>
</dbReference>
<dbReference type="PROSITE" id="PS00606">
    <property type="entry name" value="KS3_1"/>
    <property type="match status" value="1"/>
</dbReference>
<dbReference type="PROSITE" id="PS52004">
    <property type="entry name" value="KS3_2"/>
    <property type="match status" value="1"/>
</dbReference>
<dbReference type="PROSITE" id="PS52019">
    <property type="entry name" value="PKS_MFAS_DH"/>
    <property type="match status" value="1"/>
</dbReference>
<keyword id="KW-0489">Methyltransferase</keyword>
<keyword id="KW-0511">Multifunctional enzyme</keyword>
<keyword id="KW-0596">Phosphopantetheine</keyword>
<keyword id="KW-0597">Phosphoprotein</keyword>
<keyword id="KW-1185">Reference proteome</keyword>
<keyword id="KW-0808">Transferase</keyword>
<reference key="1">
    <citation type="journal article" date="2008" name="Nat. Biotechnol.">
        <title>Genome sequencing and analysis of the filamentous fungus Penicillium chrysogenum.</title>
        <authorList>
            <person name="van den Berg M.A."/>
            <person name="Albang R."/>
            <person name="Albermann K."/>
            <person name="Badger J.H."/>
            <person name="Daran J.-M."/>
            <person name="Driessen A.J.M."/>
            <person name="Garcia-Estrada C."/>
            <person name="Fedorova N.D."/>
            <person name="Harris D.M."/>
            <person name="Heijne W.H.M."/>
            <person name="Joardar V.S."/>
            <person name="Kiel J.A.K.W."/>
            <person name="Kovalchuk A."/>
            <person name="Martin J.F."/>
            <person name="Nierman W.C."/>
            <person name="Nijland J.G."/>
            <person name="Pronk J.T."/>
            <person name="Roubos J.A."/>
            <person name="van der Klei I.J."/>
            <person name="van Peij N.N.M.E."/>
            <person name="Veenhuis M."/>
            <person name="von Doehren H."/>
            <person name="Wagner C."/>
            <person name="Wortman J.R."/>
            <person name="Bovenberg R.A.L."/>
        </authorList>
    </citation>
    <scope>NUCLEOTIDE SEQUENCE [LARGE SCALE GENOMIC DNA]</scope>
    <source>
        <strain>ATCC 28089 / DSM 1075 / NRRL 1951 / Wisconsin 54-1255</strain>
    </source>
</reference>
<reference key="2">
    <citation type="journal article" date="2013" name="Tetrahedron">
        <title>Reconstituted biosynthesis of fungal meroterpenoid andrastin A.</title>
        <authorList>
            <person name="Matsuda Y."/>
            <person name="Awakawa T."/>
            <person name="Abe I."/>
        </authorList>
    </citation>
    <scope>IDENTIFICATION</scope>
    <scope>FUNCTION</scope>
    <scope>CATALYTIC ACTIVITY</scope>
    <scope>PATHWAY</scope>
</reference>
<feature type="chain" id="PRO_0000446474" description="Non-reducing polyketide synthase adrD">
    <location>
        <begin position="1"/>
        <end position="2496"/>
    </location>
</feature>
<feature type="domain" description="Ketosynthase family 3 (KS3)" evidence="4">
    <location>
        <begin position="387"/>
        <end position="808"/>
    </location>
</feature>
<feature type="domain" description="PKS/mFAS DH" evidence="5">
    <location>
        <begin position="1295"/>
        <end position="1602"/>
    </location>
</feature>
<feature type="domain" description="Carrier" evidence="3">
    <location>
        <begin position="1652"/>
        <end position="1726"/>
    </location>
</feature>
<feature type="region of interest" description="N-terminal acylcarrier protein transacylase domain (SAT)" evidence="2">
    <location>
        <begin position="15"/>
        <end position="254"/>
    </location>
</feature>
<feature type="region of interest" description="Malonyl-CoA:ACP transacylase (MAT) domain" evidence="2">
    <location>
        <begin position="914"/>
        <end position="1223"/>
    </location>
</feature>
<feature type="region of interest" description="N-terminal hotdog fold" evidence="5">
    <location>
        <begin position="1295"/>
        <end position="1423"/>
    </location>
</feature>
<feature type="region of interest" description="Product template (PT) domain" evidence="2">
    <location>
        <begin position="1296"/>
        <end position="1601"/>
    </location>
</feature>
<feature type="region of interest" description="C-terminal hotdog fold" evidence="5">
    <location>
        <begin position="1451"/>
        <end position="1602"/>
    </location>
</feature>
<feature type="region of interest" description="Disordered" evidence="7">
    <location>
        <begin position="1615"/>
        <end position="1645"/>
    </location>
</feature>
<feature type="region of interest" description="Methyltransferase (CMeT) domain" evidence="2">
    <location>
        <begin position="1888"/>
        <end position="2121"/>
    </location>
</feature>
<feature type="region of interest" description="Thioesterase (TE) domain" evidence="1">
    <location>
        <begin position="2151"/>
        <end position="2496"/>
    </location>
</feature>
<feature type="compositionally biased region" description="Basic and acidic residues" evidence="7">
    <location>
        <begin position="1615"/>
        <end position="1629"/>
    </location>
</feature>
<feature type="compositionally biased region" description="Polar residues" evidence="7">
    <location>
        <begin position="1633"/>
        <end position="1645"/>
    </location>
</feature>
<feature type="active site" description="For beta-ketoacyl synthase activity" evidence="4">
    <location>
        <position position="552"/>
    </location>
</feature>
<feature type="active site" description="For beta-ketoacyl synthase activity" evidence="4">
    <location>
        <position position="687"/>
    </location>
</feature>
<feature type="active site" description="For beta-ketoacyl synthase activity" evidence="4">
    <location>
        <position position="726"/>
    </location>
</feature>
<feature type="active site" description="For acyl/malonyl transferase activity" evidence="6">
    <location>
        <position position="1001"/>
    </location>
</feature>
<feature type="active site" description="Proton acceptor; for dehydratase activity" evidence="5">
    <location>
        <position position="1326"/>
    </location>
</feature>
<feature type="active site" description="Proton donor; for dehydratase activity" evidence="5">
    <location>
        <position position="1509"/>
    </location>
</feature>
<feature type="active site" description="For thioesterase activity" evidence="1">
    <location>
        <position position="2274"/>
    </location>
</feature>
<feature type="active site" description="For thioesterase activity" evidence="1">
    <location>
        <position position="2433"/>
    </location>
</feature>
<feature type="modified residue" description="O-(pantetheine 4'-phosphoryl)serine" evidence="3">
    <location>
        <position position="1686"/>
    </location>
</feature>
<protein>
    <recommendedName>
        <fullName evidence="9">Non-reducing polyketide synthase adrD</fullName>
        <ecNumber evidence="10">2.3.1.-</ecNumber>
    </recommendedName>
    <alternativeName>
        <fullName evidence="9">Andrastin A biosynthesis cluster protein D</fullName>
    </alternativeName>
</protein>
<gene>
    <name evidence="9" type="primary">adrD</name>
    <name type="ORF">Pc22g22850</name>
</gene>
<sequence>MVDLSQTSPGRPVCLVFGPQIAEIDESLFYISRNIDENPALHFLKDVLRELPSLWSTISDTWAPLSSIPGAAQLTALADCVQGGPIATHENPTNVLLTPLTVIRQIIDAWKFKEKSQNKCRIMDAQGFCVGFLAAVAVACSNDAKEFADIASTMVRLAVCIGTAVDLDGISHGQARSVAVRWKSASENEQLNRLLTSSSTAYVSCFTDTNSATVTVAEDAVDDLIKELGSHGLSVKIIDLKGRFHHASHITAVQYLSSLCDTDDRLRLAGTGTCVLPLRSNVDGHLIGKISDIHKIALESILTKPSQWAMTVSAAVEHSRETNDDLSLAAIGTGQFVPRLVRNRVLDHTNNSLWDTKHEMLPNGIHKSSFPTESMQSTNMAAMAGTATPIAITGMGCRYAQADSPEQLWEMLELGQCGVSALPNERFKMDKLRREPKGPFWGNYLANPDVFDHRFFGISAREADAMDPQQRLLLQVGYEAMESAGYCGLRNPNVPTDIGCYVGVGSDDYTENVGSTHANAFSATGTLQAFCTGRLSHYFGWTGPSVVVDTACSSAAVSIHLACKALQTNECSIAVAGGVNVMTSPRVTQNLAAASFLSPTGASKAFDATANGYCRGEGAGLVVLRPLADAIRNGDPILAVIGGSAVNQGSNCSPITVPDSNSQRSLYRKALLASGIPPEDVTYVEAHGTGTQVGDPIEFDSIRKAFGGPGRSEKLHVGSIKDNIGHTETASGVAGLLKTVLMMQKQQIPKQANFVQLNPKIPALDDAEIAIPTKSIHWPSAATSSSNAVAMVTNYGAAGSNAALVVKQYKAPSEPSNRASLLPSEVPIILAANSVESLRSYCKVLLPSVRNAQLGSCQDIAYNLAVKQSRDMDYISTLTVPADQPNELIAKLESMSTETTNPKKQPSSRLPVILCFGGQNGNETTLSEDLFNQCELLQYHLMECEKVCRTRDLPSLFPRIFQTGPIEDTVSLHCILFSIQYASAMSWISSGLQVDRIIGHSFGQLTGLCVAGGLNLSDALYLVSERARMIQSMWGSERGAMLLVEGTEADVQSLLNRATQQMADAAVDVACVNGPRNIILAGDERSLQMIQKLSAETPSILRTKRLKNTHAFHSRLVDSIVPSLSKVAQQLQYTPLSIPLEACWQDGDWSFVSPDKIVAHSRGRVDFQTAVERVAQRIQGPAIWLEAGSASPIIPLVRRVIDTVTASSKDHLYQSLDLGGPQGQKNLSQATCNLWSRGAKVQFWQFHGSQAKSYNWINLPPYQFAQTRHWIAYDPNAFAPLPEDKPTVPSSGGPKEFVQLLTKQPTECVFAINTKDHLYQECTQGHAVLDQNLCPASLYFEVIVRAAGLVRPENDTSPSMPHLQNLAISAPLVLNPTGNVLLSLTRARAGDSPWSFSLYTREPNTNLVTTHATGEISLHPFGQNTPLFVRLHSMNRLIDSSRVDSIANSRESSGLKGFAVYQAFRRVVNYADCYRGVERVFATEHEAAGIVNLLSSKTKDAACDPMLVDNFIQVAGIHVNCLSETNEDEVFVCTGVGEILIGEAFMTRDPKSSRSWGVYSNMDRSVKNKIACDTFVLDRETGKLAVTILSAEFTSVSIAGLARVLKKLNNQADDEKASPDLSLRNDSKVDVNPTPQNTAPVVQPTRQAAAEPGYFVVVQEMLCDLLGIVSEELLPSSNLEEIGVDSLMRTEVLVEIKKRFNVSIDASTLTEIPNIQALVQTIFPDAATAPLTHGVHPSLEIETTDVPDSENNTHVIPTPISDADVHGLIDIAPTLFTDIQRSTSHSEMTQWNGFCESVYPKQMALVTAYVVEAFKSLGVSLDKFEAEGVIPQVPVLKQHGKVRNQLYSILEFSNLIRATDRGFVRTTIPVPTISSDVLHEEIIRLYPQHRSEHHLLKTTGSRLSDCLSGAADPLSLLFQDAEARRLMEDVYTNAPMFKGATNHLAQYLVNLLGRMDTTREINILEIGGGTGGTTKALLNQLTAVPGLRFQYTFTDLSSGLLTLARKKFKHYNFMKYQVLNVEQTPTPDMVGQYDIILSSNCVHATRNLVQSCSNINKLLRPDGILCLIELTRNLFWFDLVFGLLEGWWLFEDGRQHALATEHMWKQTLVQSGFQWVDWTHNDSEESNVLRVITASPTSAVILPPTPGSPLRVMNEETVPYGKNGAVELSADIYYPRDLQPIGKPRPIALLIHGGGHIMLSRRDVRSKQVKMLLDAGFLPVSVDYRLCPEVSLSEGPMHDVCDALSWARNVLPKLSLCRPDIQSDGTQVVAVGWSTGAHLAMTLAWTAEQRGIEPPQAILAFYGPTDYEDPFWSKPNFPYGKSAASPEMSYNLWEGMHETPITAYNPPANQNALGGWMSPADPRSRIALHMNWKGQSLPMLLHGGHFWSAHKDGDCGEDLPVPTLKEIQAVSPLAQIRNGCYKTPTFIIHGTLDDLIPVEQAQRTSQELVTKGVEVELRIVDKAVHLFDIYPGFEKDHAAAQAVQDGYEFLRDHVRY</sequence>
<proteinExistence type="evidence at protein level"/>
<comment type="function">
    <text evidence="8">Non-reducing polyketide synthase; part of the gene cluster that mediates the biosynthesis of andrastins, meroterpenoid compounds that exhibit inhibitory activity against ras farnesyltransferase, suggesting that they could be promising leads for antitumor agents (Ref.2). The first step of the pathway is the synthesis of 3,5-dimethylorsellinic acid (DMOA) by the polyketide synthase adrD via condensation of one acetyl-CoA starter unit with 3 malonyl-CoA units and 2 methylations (Ref.2). DMAO is then converted to farnesyl-DMAO by the prenyltransferase adrG (Ref.2). The methyltransferase adrK catalyzes the methylation of the carboxyl group of farnesyl-DMAO to farnesyl-DMAO methyl ester which is further converted to epoxyfarnesyl-DMAO methyl ester by the FAD-dependent monooxygenase adrH (Ref.2). The terpene cyclase adrI then catalyzes the carbon skeletal rearrangement to generate the andrastin E, the first compound in the pathway having the andrastin scaffold, with the tetracyclic ring system (Ref.2). The post-cyclization tailoring enzymes adrF, adrE, adrJ, and adrA, are involved in the conversion of andrastin E into andrastin A. The short chain dehydrogenase adrF is responsible for the oxidation of the C-3 a hydroxyl group of andrastin E to yield the corresponding ketone, andrastin D. The ketoreductase adrE stereoselectively reduces the carbonyl moiety to reverse the stereochemistry of the C-3 position to yield andrastin F. The acetyltransferase adrJ is the acetyltransferase that attaches the acetyl group to the C-3 hydroxyl group of andrastin F to yield andrastin C. Finally, the cytochrome P450 monooxygenase adrA catalyzes two sequential oxidation reactions of the C-23 methyl group, to generate the corresponding alcohol andrastin B, and aldehyde andrastin A (Ref.2).</text>
</comment>
<comment type="catalytic activity">
    <reaction evidence="10">
        <text>3 malonyl-CoA + acetyl-CoA + 2 S-adenosyl-L-methionine = 3,5-dimethylorsellinate + 2 S-adenosyl-L-homocysteine + 3 CO2 + 4 CoA</text>
        <dbReference type="Rhea" id="RHEA:49628"/>
        <dbReference type="ChEBI" id="CHEBI:16526"/>
        <dbReference type="ChEBI" id="CHEBI:57287"/>
        <dbReference type="ChEBI" id="CHEBI:57288"/>
        <dbReference type="ChEBI" id="CHEBI:57384"/>
        <dbReference type="ChEBI" id="CHEBI:57856"/>
        <dbReference type="ChEBI" id="CHEBI:59789"/>
        <dbReference type="ChEBI" id="CHEBI:131856"/>
    </reaction>
    <physiologicalReaction direction="left-to-right" evidence="10">
        <dbReference type="Rhea" id="RHEA:49629"/>
    </physiologicalReaction>
</comment>
<comment type="pathway">
    <text evidence="10">Secondary metabolite biosynthesis; terpenoid biosynthesis.</text>
</comment>
<comment type="domain">
    <text evidence="10">Multidomain protein; including a starter unit:ACP transacylase (SAT) that selects the starter unit; a ketosynthase (KS) that catalyzes repeated decarboxylative condensation to elongate the polyketide backbone; a malonyl-CoA:ACP transacylase (MAT) that selects and transfers the extender unit malonyl-CoA; a product template (PT) domain that controls the immediate cyclization regioselectivity of the reactive polyketide backbone; a methyltransferase (CMeT) domain that transfers methyl groups to the growing polyketide; and an acyl-carrier protein (ACP) that serves as the tether of the growing and completed polyketide via its phosphopantetheinyl arm.</text>
</comment>
<comment type="domain">
    <text evidence="10">The release of the polyketide chain from the non-reducing polyketide synthase is mediated by the thioesterase (TE) domain localized at the C-ter of the protein.</text>
</comment>
<comment type="caution">
    <text evidence="8">Pc22g22850 has first been identified as a mannose-ethanolamine phosphotransferase-like protein. However, resequencing of the region showed that it correspond actually to a non-reducing polyketide synthase.</text>
</comment>
<comment type="sequence caution" evidence="10">
    <conflict type="miscellaneous discrepancy">
        <sequence resource="EMBL-CDS" id="CAP99573"/>
    </conflict>
    <text>Probable sequencing or genome assembly error.</text>
</comment>
<name>ADRD_PENRW</name>
<accession>B6HV32</accession>
<evidence type="ECO:0000250" key="1">
    <source>
        <dbReference type="UniProtKB" id="Q5ATJ7"/>
    </source>
</evidence>
<evidence type="ECO:0000255" key="2"/>
<evidence type="ECO:0000255" key="3">
    <source>
        <dbReference type="PROSITE-ProRule" id="PRU00258"/>
    </source>
</evidence>
<evidence type="ECO:0000255" key="4">
    <source>
        <dbReference type="PROSITE-ProRule" id="PRU01348"/>
    </source>
</evidence>
<evidence type="ECO:0000255" key="5">
    <source>
        <dbReference type="PROSITE-ProRule" id="PRU01363"/>
    </source>
</evidence>
<evidence type="ECO:0000255" key="6">
    <source>
        <dbReference type="PROSITE-ProRule" id="PRU10022"/>
    </source>
</evidence>
<evidence type="ECO:0000256" key="7">
    <source>
        <dbReference type="SAM" id="MobiDB-lite"/>
    </source>
</evidence>
<evidence type="ECO:0000269" key="8">
    <source ref="2"/>
</evidence>
<evidence type="ECO:0000303" key="9">
    <source ref="2"/>
</evidence>
<evidence type="ECO:0000305" key="10">
    <source ref="2"/>
</evidence>